<reference key="1">
    <citation type="submission" date="2007-10" db="EMBL/GenBank/DDBJ databases">
        <authorList>
            <consortium name="NIH - Zebrafish Gene Collection (ZGC) project"/>
        </authorList>
    </citation>
    <scope>NUCLEOTIDE SEQUENCE [LARGE SCALE MRNA]</scope>
    <source>
        <strain>SJD</strain>
        <tissue>Embryo</tissue>
    </source>
</reference>
<comment type="function">
    <text evidence="1 2">Substrate-specific adapter of a BCR (BTB-CUL3-RBX1) E3 ubiquitin ligase complex that acts as a regulator of neural crest specification (By similarity). The BCR(KBTBD8) complex acts by mediating monoubiquitination of target proteins (By similarity).</text>
</comment>
<comment type="subunit">
    <text evidence="2">Component of the BCR(KBTBD8) E3 ubiquitin ligase complex.</text>
</comment>
<comment type="subcellular location">
    <subcellularLocation>
        <location evidence="2">Cytoplasm</location>
        <location evidence="2">Cytoskeleton</location>
        <location evidence="2">Spindle</location>
    </subcellularLocation>
    <subcellularLocation>
        <location evidence="2">Golgi apparatus</location>
    </subcellularLocation>
    <text evidence="2">Translocates to the spindle apparatus during mitosis.</text>
</comment>
<comment type="similarity">
    <text evidence="4">Belongs to the KBTBD8 family.</text>
</comment>
<dbReference type="EMBL" id="BC124188">
    <property type="protein sequence ID" value="AAI24189.1"/>
    <property type="molecule type" value="mRNA"/>
</dbReference>
<dbReference type="EMBL" id="BC154345">
    <property type="protein sequence ID" value="AAI54346.1"/>
    <property type="molecule type" value="mRNA"/>
</dbReference>
<dbReference type="RefSeq" id="NP_001103500.1">
    <property type="nucleotide sequence ID" value="NM_001110030.1"/>
</dbReference>
<dbReference type="SMR" id="Q08CL3"/>
<dbReference type="FunCoup" id="Q08CL3">
    <property type="interactions" value="162"/>
</dbReference>
<dbReference type="STRING" id="7955.ENSDARP00000094847"/>
<dbReference type="PaxDb" id="7955-ENSDARP00000094847"/>
<dbReference type="GeneID" id="559966"/>
<dbReference type="KEGG" id="dre:559966"/>
<dbReference type="AGR" id="ZFIN:ZDB-GENE-030114-8"/>
<dbReference type="CTD" id="84541"/>
<dbReference type="ZFIN" id="ZDB-GENE-030114-8">
    <property type="gene designation" value="kbtbd8"/>
</dbReference>
<dbReference type="eggNOG" id="KOG4441">
    <property type="taxonomic scope" value="Eukaryota"/>
</dbReference>
<dbReference type="InParanoid" id="Q08CL3"/>
<dbReference type="OrthoDB" id="45365at2759"/>
<dbReference type="PhylomeDB" id="Q08CL3"/>
<dbReference type="Reactome" id="R-DRE-8951664">
    <property type="pathway name" value="Neddylation"/>
</dbReference>
<dbReference type="Reactome" id="R-DRE-983168">
    <property type="pathway name" value="Antigen processing: Ubiquitination &amp; Proteasome degradation"/>
</dbReference>
<dbReference type="PRO" id="PR:Q08CL3"/>
<dbReference type="Proteomes" id="UP000000437">
    <property type="component" value="Alternate scaffold 11"/>
</dbReference>
<dbReference type="Proteomes" id="UP000000437">
    <property type="component" value="Chromosome 11"/>
</dbReference>
<dbReference type="GO" id="GO:0031463">
    <property type="term" value="C:Cul3-RING ubiquitin ligase complex"/>
    <property type="evidence" value="ECO:0000250"/>
    <property type="project" value="UniProtKB"/>
</dbReference>
<dbReference type="GO" id="GO:0005737">
    <property type="term" value="C:cytoplasm"/>
    <property type="evidence" value="ECO:0000318"/>
    <property type="project" value="GO_Central"/>
</dbReference>
<dbReference type="GO" id="GO:0005794">
    <property type="term" value="C:Golgi apparatus"/>
    <property type="evidence" value="ECO:0007669"/>
    <property type="project" value="UniProtKB-SubCell"/>
</dbReference>
<dbReference type="GO" id="GO:0005819">
    <property type="term" value="C:spindle"/>
    <property type="evidence" value="ECO:0007669"/>
    <property type="project" value="UniProtKB-SubCell"/>
</dbReference>
<dbReference type="GO" id="GO:1990756">
    <property type="term" value="F:ubiquitin-like ligase-substrate adaptor activity"/>
    <property type="evidence" value="ECO:0000318"/>
    <property type="project" value="GO_Central"/>
</dbReference>
<dbReference type="GO" id="GO:0014032">
    <property type="term" value="P:neural crest cell development"/>
    <property type="evidence" value="ECO:0000250"/>
    <property type="project" value="UniProtKB"/>
</dbReference>
<dbReference type="GO" id="GO:0014029">
    <property type="term" value="P:neural crest formation"/>
    <property type="evidence" value="ECO:0000250"/>
    <property type="project" value="UniProtKB"/>
</dbReference>
<dbReference type="GO" id="GO:0043161">
    <property type="term" value="P:proteasome-mediated ubiquitin-dependent protein catabolic process"/>
    <property type="evidence" value="ECO:0000318"/>
    <property type="project" value="GO_Central"/>
</dbReference>
<dbReference type="GO" id="GO:0006513">
    <property type="term" value="P:protein monoubiquitination"/>
    <property type="evidence" value="ECO:0000250"/>
    <property type="project" value="UniProtKB"/>
</dbReference>
<dbReference type="GO" id="GO:0006417">
    <property type="term" value="P:regulation of translation"/>
    <property type="evidence" value="ECO:0007669"/>
    <property type="project" value="UniProtKB-KW"/>
</dbReference>
<dbReference type="CDD" id="cd18483">
    <property type="entry name" value="BACK_KBTBD8"/>
    <property type="match status" value="1"/>
</dbReference>
<dbReference type="CDD" id="cd18274">
    <property type="entry name" value="BTB_POZ_KBTBD8"/>
    <property type="match status" value="1"/>
</dbReference>
<dbReference type="FunFam" id="3.30.710.10:FF:000006">
    <property type="entry name" value="Kelch repeat and BTB domain-containing 6"/>
    <property type="match status" value="1"/>
</dbReference>
<dbReference type="FunFam" id="2.120.10.80:FF:000020">
    <property type="entry name" value="Kelch repeat and BTB domain-containing protein 8"/>
    <property type="match status" value="1"/>
</dbReference>
<dbReference type="FunFam" id="1.25.40.420:FF:000014">
    <property type="entry name" value="kelch repeat and BTB domain-containing protein 8"/>
    <property type="match status" value="1"/>
</dbReference>
<dbReference type="Gene3D" id="1.25.40.420">
    <property type="match status" value="1"/>
</dbReference>
<dbReference type="Gene3D" id="2.120.10.80">
    <property type="entry name" value="Kelch-type beta propeller"/>
    <property type="match status" value="1"/>
</dbReference>
<dbReference type="Gene3D" id="3.30.710.10">
    <property type="entry name" value="Potassium Channel Kv1.1, Chain A"/>
    <property type="match status" value="1"/>
</dbReference>
<dbReference type="InterPro" id="IPR011705">
    <property type="entry name" value="BACK"/>
</dbReference>
<dbReference type="InterPro" id="IPR017096">
    <property type="entry name" value="BTB-kelch_protein"/>
</dbReference>
<dbReference type="InterPro" id="IPR000210">
    <property type="entry name" value="BTB/POZ_dom"/>
</dbReference>
<dbReference type="InterPro" id="IPR028764">
    <property type="entry name" value="BTB/POZ_KBTBD8"/>
</dbReference>
<dbReference type="InterPro" id="IPR015915">
    <property type="entry name" value="Kelch-typ_b-propeller"/>
</dbReference>
<dbReference type="InterPro" id="IPR006652">
    <property type="entry name" value="Kelch_1"/>
</dbReference>
<dbReference type="InterPro" id="IPR011333">
    <property type="entry name" value="SKP1/BTB/POZ_sf"/>
</dbReference>
<dbReference type="PANTHER" id="PTHR24412">
    <property type="entry name" value="KELCH PROTEIN"/>
    <property type="match status" value="1"/>
</dbReference>
<dbReference type="PANTHER" id="PTHR24412:SF433">
    <property type="entry name" value="KELCH REPEAT AND BTB DOMAIN-CONTAINING PROTEIN 8"/>
    <property type="match status" value="1"/>
</dbReference>
<dbReference type="Pfam" id="PF07707">
    <property type="entry name" value="BACK"/>
    <property type="match status" value="1"/>
</dbReference>
<dbReference type="Pfam" id="PF00651">
    <property type="entry name" value="BTB"/>
    <property type="match status" value="1"/>
</dbReference>
<dbReference type="Pfam" id="PF01344">
    <property type="entry name" value="Kelch_1"/>
    <property type="match status" value="2"/>
</dbReference>
<dbReference type="PIRSF" id="PIRSF037037">
    <property type="entry name" value="Kelch-like_protein_gigaxonin"/>
    <property type="match status" value="1"/>
</dbReference>
<dbReference type="SMART" id="SM00875">
    <property type="entry name" value="BACK"/>
    <property type="match status" value="1"/>
</dbReference>
<dbReference type="SMART" id="SM00225">
    <property type="entry name" value="BTB"/>
    <property type="match status" value="1"/>
</dbReference>
<dbReference type="SMART" id="SM00612">
    <property type="entry name" value="Kelch"/>
    <property type="match status" value="4"/>
</dbReference>
<dbReference type="SUPFAM" id="SSF117281">
    <property type="entry name" value="Kelch motif"/>
    <property type="match status" value="1"/>
</dbReference>
<dbReference type="SUPFAM" id="SSF54695">
    <property type="entry name" value="POZ domain"/>
    <property type="match status" value="1"/>
</dbReference>
<dbReference type="PROSITE" id="PS50097">
    <property type="entry name" value="BTB"/>
    <property type="match status" value="1"/>
</dbReference>
<protein>
    <recommendedName>
        <fullName>Kelch repeat and BTB domain-containing protein 8</fullName>
    </recommendedName>
    <alternativeName>
        <fullName>T-cell activation kelch repeat protein</fullName>
        <shortName>TA-KRP</shortName>
    </alternativeName>
</protein>
<keyword id="KW-0963">Cytoplasm</keyword>
<keyword id="KW-0206">Cytoskeleton</keyword>
<keyword id="KW-0333">Golgi apparatus</keyword>
<keyword id="KW-0880">Kelch repeat</keyword>
<keyword id="KW-1185">Reference proteome</keyword>
<keyword id="KW-0677">Repeat</keyword>
<keyword id="KW-0810">Translation regulation</keyword>
<keyword id="KW-0833">Ubl conjugation pathway</keyword>
<gene>
    <name type="primary">kbtbd8</name>
    <name type="synonym">takrp</name>
    <name type="ORF">zgc:152950</name>
</gene>
<feature type="chain" id="PRO_0000278222" description="Kelch repeat and BTB domain-containing protein 8">
    <location>
        <begin position="1"/>
        <end position="601"/>
    </location>
</feature>
<feature type="domain" description="BTB" evidence="3">
    <location>
        <begin position="48"/>
        <end position="116"/>
    </location>
</feature>
<feature type="domain" description="BACK">
    <location>
        <begin position="151"/>
        <end position="253"/>
    </location>
</feature>
<feature type="repeat" description="Kelch 1">
    <location>
        <begin position="336"/>
        <end position="390"/>
    </location>
</feature>
<feature type="repeat" description="Kelch 2">
    <location>
        <begin position="391"/>
        <end position="441"/>
    </location>
</feature>
<feature type="repeat" description="Kelch 3">
    <location>
        <begin position="443"/>
        <end position="481"/>
    </location>
</feature>
<feature type="repeat" description="Kelch 4">
    <location>
        <begin position="482"/>
        <end position="529"/>
    </location>
</feature>
<feature type="repeat" description="Kelch 5">
    <location>
        <begin position="542"/>
        <end position="588"/>
    </location>
</feature>
<accession>Q08CL3</accession>
<accession>A8KC38</accession>
<name>KBTB8_DANRE</name>
<proteinExistence type="evidence at transcript level"/>
<sequence>MAASGDVGKLLQVQNGTPASTSYNGVDALHACNILQQLKALYDEAQLTDIVVEVDHGKTFSCHRNVLAAISPYFRSMFTSGLTESSQREVRIVGVESESMHLVLDYAYTSRVTLTESNVQALFTAASIFQIPALQDQCAQFMISRLDPQNCIGVFMFADAYGHQELRERSQDYIRKKFLCVMGEQEFLHLTKDQLVSILNSDDLNVEKEEHVYESIVHWLEYDCSRREADLPEVFAKCIRLPLLEEAFLSRIPPAFALALSRDSSDKSRLNGTNGCSQRLGMTASEMIICFDAAHKHSGKKQTVPCLDIAAGKVYKLCKPPNDLREVGILISSENDIFIAGGYRPSNSEVCIDHRAESDFWQYEHAGNRWLPRSPMLRARIGCRLVHCCGKLYALGGRVYEGDGRNALKSVECYDARDNCWTAVSPMPVAMEFHSTIEYKDRIYVLQGEYFFCFDPRKDYWGHLPSMNIPRTQGLAALHKNCIYYIAGICRNHQRTFTVEVYDIEQNTWCRKRDLPFDQATSPYIKVLLLQGRLHLFVRATQVMVEEHVFRTSRKNSLYQYDDEADHWTKVYETPDRLWDLGRHFECVVAKLYPQCLQKVL</sequence>
<evidence type="ECO:0000250" key="1">
    <source>
        <dbReference type="UniProtKB" id="A0A1B8YAB1"/>
    </source>
</evidence>
<evidence type="ECO:0000250" key="2">
    <source>
        <dbReference type="UniProtKB" id="Q8NFY9"/>
    </source>
</evidence>
<evidence type="ECO:0000255" key="3">
    <source>
        <dbReference type="PROSITE-ProRule" id="PRU00037"/>
    </source>
</evidence>
<evidence type="ECO:0000305" key="4"/>
<organism>
    <name type="scientific">Danio rerio</name>
    <name type="common">Zebrafish</name>
    <name type="synonym">Brachydanio rerio</name>
    <dbReference type="NCBI Taxonomy" id="7955"/>
    <lineage>
        <taxon>Eukaryota</taxon>
        <taxon>Metazoa</taxon>
        <taxon>Chordata</taxon>
        <taxon>Craniata</taxon>
        <taxon>Vertebrata</taxon>
        <taxon>Euteleostomi</taxon>
        <taxon>Actinopterygii</taxon>
        <taxon>Neopterygii</taxon>
        <taxon>Teleostei</taxon>
        <taxon>Ostariophysi</taxon>
        <taxon>Cypriniformes</taxon>
        <taxon>Danionidae</taxon>
        <taxon>Danioninae</taxon>
        <taxon>Danio</taxon>
    </lineage>
</organism>